<sequence length="409" mass="44218">MAAATTTTSRPLLLSRQQAAASSLQCRLPRRPGSSLFAGQGQASTPNVRCMAVVDTASAPAPAAARKRSSYDMITLTTWLLKQEQEGVIDNEMTIVLSSISTACKQIASLVQRAPISNLTGVQGATNVQGEDQKKLDVISNEVFSNCLRWSGRTGVIASEEEDVPVAVEESYSGNYIVVFDPLDGSSNIDAAVSTGSIFGIYSPSDECHIGDDATLDEVTQMCIVNVCQPGSNLLAAGYCMYSSSVIFVLTIGTGVYVFTLDPMYGEFVLTQEKVQIPKSGKIYSFNEGNYALWDDKLKKYMDSLKEPGTSGKPYSARYIGSLVGDFHRTMLYGGIYGYPSDQKSKNGKLRLLYECAPMSFIAEQAGGKGSDGHQRVLDIMPTAVHQRVPLYVGSVEEVEKVEKFLSSE</sequence>
<accession>P09195</accession>
<organism>
    <name type="scientific">Triticum aestivum</name>
    <name type="common">Wheat</name>
    <dbReference type="NCBI Taxonomy" id="4565"/>
    <lineage>
        <taxon>Eukaryota</taxon>
        <taxon>Viridiplantae</taxon>
        <taxon>Streptophyta</taxon>
        <taxon>Embryophyta</taxon>
        <taxon>Tracheophyta</taxon>
        <taxon>Spermatophyta</taxon>
        <taxon>Magnoliopsida</taxon>
        <taxon>Liliopsida</taxon>
        <taxon>Poales</taxon>
        <taxon>Poaceae</taxon>
        <taxon>BOP clade</taxon>
        <taxon>Pooideae</taxon>
        <taxon>Triticodae</taxon>
        <taxon>Triticeae</taxon>
        <taxon>Triticinae</taxon>
        <taxon>Triticum</taxon>
    </lineage>
</organism>
<keyword id="KW-0113">Calvin cycle</keyword>
<keyword id="KW-0119">Carbohydrate metabolism</keyword>
<keyword id="KW-0150">Chloroplast</keyword>
<keyword id="KW-1015">Disulfide bond</keyword>
<keyword id="KW-0378">Hydrolase</keyword>
<keyword id="KW-0460">Magnesium</keyword>
<keyword id="KW-0479">Metal-binding</keyword>
<keyword id="KW-0934">Plastid</keyword>
<keyword id="KW-1185">Reference proteome</keyword>
<keyword id="KW-0809">Transit peptide</keyword>
<evidence type="ECO:0000250" key="1"/>
<evidence type="ECO:0000255" key="2"/>
<evidence type="ECO:0000269" key="3">
    <source>
    </source>
</evidence>
<evidence type="ECO:0000305" key="4"/>
<name>F16P1_WHEAT</name>
<reference key="1">
    <citation type="journal article" date="1988" name="Nucleic Acids Res.">
        <title>Chloroplast fructose-1,6-bisphosphatase: the product of a mosaic gene.</title>
        <authorList>
            <person name="Raines C.A."/>
            <person name="Lloyd J.C."/>
            <person name="Longstaff M."/>
            <person name="Bradley D."/>
            <person name="Dyer T.A."/>
        </authorList>
    </citation>
    <scope>NUCLEOTIDE SEQUENCE [MRNA]</scope>
    <scope>INDUCTION BY LIGHT</scope>
    <source>
        <strain>cv. Mardler</strain>
    </source>
</reference>
<reference key="2">
    <citation type="journal article" date="1991" name="Mol. Gen. Genet.">
        <title>The chloroplast FBPase gene of wheat: structure and expression of the promoter in photosynthetic and meristematic cells of transgenic tobacco plants.</title>
        <authorList>
            <person name="Lloyd J.C."/>
            <person name="Raines C.A."/>
            <person name="John U.P."/>
            <person name="Dyer T.A."/>
        </authorList>
    </citation>
    <scope>NUCLEOTIDE SEQUENCE [GENOMIC DNA]</scope>
    <scope>TISSUE SPECIFICITY</scope>
    <source>
        <strain>cv. Chinese Spring</strain>
        <tissue>Etiolated shoot</tissue>
    </source>
</reference>
<dbReference type="EC" id="3.1.3.11"/>
<dbReference type="EMBL" id="X07780">
    <property type="protein sequence ID" value="CAA30612.1"/>
    <property type="molecule type" value="mRNA"/>
</dbReference>
<dbReference type="EMBL" id="X53957">
    <property type="protein sequence ID" value="CAA37908.1"/>
    <property type="molecule type" value="Genomic_DNA"/>
</dbReference>
<dbReference type="PIR" id="S14060">
    <property type="entry name" value="PAWTF"/>
</dbReference>
<dbReference type="RefSeq" id="NP_001392676.1">
    <property type="nucleotide sequence ID" value="NM_001405747.1"/>
</dbReference>
<dbReference type="SMR" id="P09195"/>
<dbReference type="STRING" id="4565.P09195"/>
<dbReference type="PaxDb" id="4565-Traes_4AS_91D4C5213.1"/>
<dbReference type="EnsemblPlants" id="TraesARI4A03G02071620.1">
    <property type="protein sequence ID" value="TraesARI4A03G02071620.1"/>
    <property type="gene ID" value="TraesARI4A03G02071620"/>
</dbReference>
<dbReference type="EnsemblPlants" id="TraesCAD_scaffold_021128_01G000100.1">
    <property type="protein sequence ID" value="TraesCAD_scaffold_021128_01G000100.1"/>
    <property type="gene ID" value="TraesCAD_scaffold_021128_01G000100"/>
</dbReference>
<dbReference type="EnsemblPlants" id="TraesCLE_scaffold_017775_01G000300.1">
    <property type="protein sequence ID" value="TraesCLE_scaffold_017775_01G000300.1"/>
    <property type="gene ID" value="TraesCLE_scaffold_017775_01G000300"/>
</dbReference>
<dbReference type="EnsemblPlants" id="TraesCS4A02G093100.1">
    <property type="protein sequence ID" value="TraesCS4A02G093100.1"/>
    <property type="gene ID" value="TraesCS4A02G093100"/>
</dbReference>
<dbReference type="EnsemblPlants" id="TraesCS4A03G0191300.1">
    <property type="protein sequence ID" value="TraesCS4A03G0191300.1.CDS"/>
    <property type="gene ID" value="TraesCS4A03G0191300"/>
</dbReference>
<dbReference type="EnsemblPlants" id="TraesJAG4A03G02042730.1">
    <property type="protein sequence ID" value="TraesJAG4A03G02042730.1"/>
    <property type="gene ID" value="TraesJAG4A03G02042730"/>
</dbReference>
<dbReference type="EnsemblPlants" id="TraesJUL4A03G02054710.1">
    <property type="protein sequence ID" value="TraesJUL4A03G02054710.1"/>
    <property type="gene ID" value="TraesJUL4A03G02054710"/>
</dbReference>
<dbReference type="EnsemblPlants" id="TraesKAR4A01G0062750.1">
    <property type="protein sequence ID" value="cds.TraesKAR4A01G0062750.1"/>
    <property type="gene ID" value="TraesKAR4A01G0062750"/>
</dbReference>
<dbReference type="EnsemblPlants" id="TraesLAC4A03G01989190.1">
    <property type="protein sequence ID" value="TraesLAC4A03G01989190.1"/>
    <property type="gene ID" value="TraesLAC4A03G01989190"/>
</dbReference>
<dbReference type="EnsemblPlants" id="TraesLDM4A03G02034770.1">
    <property type="protein sequence ID" value="TraesLDM4A03G02034770.1"/>
    <property type="gene ID" value="TraesLDM4A03G02034770"/>
</dbReference>
<dbReference type="EnsemblPlants" id="TraesMAC4A03G02035100.1">
    <property type="protein sequence ID" value="TraesMAC4A03G02035100.1"/>
    <property type="gene ID" value="TraesMAC4A03G02035100"/>
</dbReference>
<dbReference type="EnsemblPlants" id="TraesNOR4A03G02062290.1">
    <property type="protein sequence ID" value="TraesNOR4A03G02062290.1"/>
    <property type="gene ID" value="TraesNOR4A03G02062290"/>
</dbReference>
<dbReference type="EnsemblPlants" id="TraesROB_scaffold_126890_01G000100.1">
    <property type="protein sequence ID" value="TraesROB_scaffold_126890_01G000100.1"/>
    <property type="gene ID" value="TraesROB_scaffold_126890_01G000100"/>
</dbReference>
<dbReference type="EnsemblPlants" id="TraesSTA4A03G02031900.1">
    <property type="protein sequence ID" value="TraesSTA4A03G02031900.1"/>
    <property type="gene ID" value="TraesSTA4A03G02031900"/>
</dbReference>
<dbReference type="EnsemblPlants" id="TraesSYM4A03G02061720.1">
    <property type="protein sequence ID" value="TraesSYM4A03G02061720.1"/>
    <property type="gene ID" value="TraesSYM4A03G02061720"/>
</dbReference>
<dbReference type="EnsemblPlants" id="TraesWEE_scaffold_059257_01G000200.1">
    <property type="protein sequence ID" value="TraesWEE_scaffold_059257_01G000200.1"/>
    <property type="gene ID" value="TraesWEE_scaffold_059257_01G000200"/>
</dbReference>
<dbReference type="GeneID" id="543276"/>
<dbReference type="Gramene" id="TraesARI4A03G02071620.1">
    <property type="protein sequence ID" value="TraesARI4A03G02071620.1"/>
    <property type="gene ID" value="TraesARI4A03G02071620"/>
</dbReference>
<dbReference type="Gramene" id="TraesCAD_scaffold_021128_01G000100.1">
    <property type="protein sequence ID" value="TraesCAD_scaffold_021128_01G000100.1"/>
    <property type="gene ID" value="TraesCAD_scaffold_021128_01G000100"/>
</dbReference>
<dbReference type="Gramene" id="TraesCLE_scaffold_017775_01G000300.1">
    <property type="protein sequence ID" value="TraesCLE_scaffold_017775_01G000300.1"/>
    <property type="gene ID" value="TraesCLE_scaffold_017775_01G000300"/>
</dbReference>
<dbReference type="Gramene" id="TraesCS4A02G093100.1">
    <property type="protein sequence ID" value="TraesCS4A02G093100.1"/>
    <property type="gene ID" value="TraesCS4A02G093100"/>
</dbReference>
<dbReference type="Gramene" id="TraesCS4A03G0191300.1">
    <property type="protein sequence ID" value="TraesCS4A03G0191300.1.CDS"/>
    <property type="gene ID" value="TraesCS4A03G0191300"/>
</dbReference>
<dbReference type="Gramene" id="TraesJAG4A03G02042730.1">
    <property type="protein sequence ID" value="TraesJAG4A03G02042730.1"/>
    <property type="gene ID" value="TraesJAG4A03G02042730"/>
</dbReference>
<dbReference type="Gramene" id="TraesJUL4A03G02054710.1">
    <property type="protein sequence ID" value="TraesJUL4A03G02054710.1"/>
    <property type="gene ID" value="TraesJUL4A03G02054710"/>
</dbReference>
<dbReference type="Gramene" id="TraesKAR4A01G0062750.1">
    <property type="protein sequence ID" value="cds.TraesKAR4A01G0062750.1"/>
    <property type="gene ID" value="TraesKAR4A01G0062750"/>
</dbReference>
<dbReference type="Gramene" id="TraesLAC4A03G01989190.1">
    <property type="protein sequence ID" value="TraesLAC4A03G01989190.1"/>
    <property type="gene ID" value="TraesLAC4A03G01989190"/>
</dbReference>
<dbReference type="Gramene" id="TraesLDM4A03G02034770.1">
    <property type="protein sequence ID" value="TraesLDM4A03G02034770.1"/>
    <property type="gene ID" value="TraesLDM4A03G02034770"/>
</dbReference>
<dbReference type="Gramene" id="TraesMAC4A03G02035100.1">
    <property type="protein sequence ID" value="TraesMAC4A03G02035100.1"/>
    <property type="gene ID" value="TraesMAC4A03G02035100"/>
</dbReference>
<dbReference type="Gramene" id="TraesNOR4A03G02062290.1">
    <property type="protein sequence ID" value="TraesNOR4A03G02062290.1"/>
    <property type="gene ID" value="TraesNOR4A03G02062290"/>
</dbReference>
<dbReference type="Gramene" id="TraesROB_scaffold_126890_01G000100.1">
    <property type="protein sequence ID" value="TraesROB_scaffold_126890_01G000100.1"/>
    <property type="gene ID" value="TraesROB_scaffold_126890_01G000100"/>
</dbReference>
<dbReference type="Gramene" id="TraesSTA4A03G02031900.1">
    <property type="protein sequence ID" value="TraesSTA4A03G02031900.1"/>
    <property type="gene ID" value="TraesSTA4A03G02031900"/>
</dbReference>
<dbReference type="Gramene" id="TraesSYM4A03G02061720.1">
    <property type="protein sequence ID" value="TraesSYM4A03G02061720.1"/>
    <property type="gene ID" value="TraesSYM4A03G02061720"/>
</dbReference>
<dbReference type="Gramene" id="TraesWEE_scaffold_059257_01G000200.1">
    <property type="protein sequence ID" value="TraesWEE_scaffold_059257_01G000200.1"/>
    <property type="gene ID" value="TraesWEE_scaffold_059257_01G000200"/>
</dbReference>
<dbReference type="eggNOG" id="KOG1458">
    <property type="taxonomic scope" value="Eukaryota"/>
</dbReference>
<dbReference type="HOGENOM" id="CLU_039977_1_0_1"/>
<dbReference type="OMA" id="YLANEMC"/>
<dbReference type="OrthoDB" id="10256725at2759"/>
<dbReference type="UniPathway" id="UPA00116"/>
<dbReference type="Proteomes" id="UP000019116">
    <property type="component" value="Chromosome 4A"/>
</dbReference>
<dbReference type="GO" id="GO:0009507">
    <property type="term" value="C:chloroplast"/>
    <property type="evidence" value="ECO:0007669"/>
    <property type="project" value="UniProtKB-SubCell"/>
</dbReference>
<dbReference type="GO" id="GO:0005737">
    <property type="term" value="C:cytoplasm"/>
    <property type="evidence" value="ECO:0000318"/>
    <property type="project" value="GO_Central"/>
</dbReference>
<dbReference type="GO" id="GO:0005829">
    <property type="term" value="C:cytosol"/>
    <property type="evidence" value="ECO:0000318"/>
    <property type="project" value="GO_Central"/>
</dbReference>
<dbReference type="GO" id="GO:0042132">
    <property type="term" value="F:fructose 1,6-bisphosphate 1-phosphatase activity"/>
    <property type="evidence" value="ECO:0000318"/>
    <property type="project" value="GO_Central"/>
</dbReference>
<dbReference type="GO" id="GO:0046872">
    <property type="term" value="F:metal ion binding"/>
    <property type="evidence" value="ECO:0007669"/>
    <property type="project" value="UniProtKB-KW"/>
</dbReference>
<dbReference type="GO" id="GO:0030388">
    <property type="term" value="P:fructose 1,6-bisphosphate metabolic process"/>
    <property type="evidence" value="ECO:0000318"/>
    <property type="project" value="GO_Central"/>
</dbReference>
<dbReference type="GO" id="GO:0006002">
    <property type="term" value="P:fructose 6-phosphate metabolic process"/>
    <property type="evidence" value="ECO:0000318"/>
    <property type="project" value="GO_Central"/>
</dbReference>
<dbReference type="GO" id="GO:0006000">
    <property type="term" value="P:fructose metabolic process"/>
    <property type="evidence" value="ECO:0000318"/>
    <property type="project" value="GO_Central"/>
</dbReference>
<dbReference type="GO" id="GO:0006094">
    <property type="term" value="P:gluconeogenesis"/>
    <property type="evidence" value="ECO:0000318"/>
    <property type="project" value="GO_Central"/>
</dbReference>
<dbReference type="GO" id="GO:0019253">
    <property type="term" value="P:reductive pentose-phosphate cycle"/>
    <property type="evidence" value="ECO:0007669"/>
    <property type="project" value="UniProtKB-UniPathway"/>
</dbReference>
<dbReference type="CDD" id="cd00354">
    <property type="entry name" value="FBPase"/>
    <property type="match status" value="1"/>
</dbReference>
<dbReference type="FunFam" id="3.40.190.80:FF:000001">
    <property type="entry name" value="Fructose-1,6-bisphosphatase class 1"/>
    <property type="match status" value="1"/>
</dbReference>
<dbReference type="FunFam" id="3.30.540.10:FF:000014">
    <property type="entry name" value="Fructose-1,6-bisphosphatase, chloroplastic"/>
    <property type="match status" value="1"/>
</dbReference>
<dbReference type="Gene3D" id="3.40.190.80">
    <property type="match status" value="1"/>
</dbReference>
<dbReference type="Gene3D" id="3.30.540.10">
    <property type="entry name" value="Fructose-1,6-Bisphosphatase, subunit A, domain 1"/>
    <property type="match status" value="1"/>
</dbReference>
<dbReference type="HAMAP" id="MF_01855">
    <property type="entry name" value="FBPase_class1"/>
    <property type="match status" value="1"/>
</dbReference>
<dbReference type="InterPro" id="IPR044015">
    <property type="entry name" value="FBPase_C_dom"/>
</dbReference>
<dbReference type="InterPro" id="IPR000146">
    <property type="entry name" value="FBPase_class-1"/>
</dbReference>
<dbReference type="InterPro" id="IPR033391">
    <property type="entry name" value="FBPase_N"/>
</dbReference>
<dbReference type="InterPro" id="IPR028343">
    <property type="entry name" value="FBPtase"/>
</dbReference>
<dbReference type="InterPro" id="IPR020548">
    <property type="entry name" value="Fructose_bisphosphatase_AS"/>
</dbReference>
<dbReference type="NCBIfam" id="NF006778">
    <property type="entry name" value="PRK09293.1-1"/>
    <property type="match status" value="1"/>
</dbReference>
<dbReference type="PANTHER" id="PTHR11556">
    <property type="entry name" value="FRUCTOSE-1,6-BISPHOSPHATASE-RELATED"/>
    <property type="match status" value="1"/>
</dbReference>
<dbReference type="PANTHER" id="PTHR11556:SF1">
    <property type="entry name" value="FRUCTOSE-BISPHOSPHATASE"/>
    <property type="match status" value="1"/>
</dbReference>
<dbReference type="Pfam" id="PF00316">
    <property type="entry name" value="FBPase"/>
    <property type="match status" value="1"/>
</dbReference>
<dbReference type="Pfam" id="PF18913">
    <property type="entry name" value="FBPase_C"/>
    <property type="match status" value="1"/>
</dbReference>
<dbReference type="PIRSF" id="PIRSF500210">
    <property type="entry name" value="FBPtase"/>
    <property type="match status" value="1"/>
</dbReference>
<dbReference type="PIRSF" id="PIRSF000904">
    <property type="entry name" value="FBPtase_SBPase"/>
    <property type="match status" value="1"/>
</dbReference>
<dbReference type="PRINTS" id="PR00115">
    <property type="entry name" value="F16BPHPHTASE"/>
</dbReference>
<dbReference type="SUPFAM" id="SSF56655">
    <property type="entry name" value="Carbohydrate phosphatase"/>
    <property type="match status" value="1"/>
</dbReference>
<dbReference type="PROSITE" id="PS00124">
    <property type="entry name" value="FBPASE"/>
    <property type="match status" value="1"/>
</dbReference>
<protein>
    <recommendedName>
        <fullName>Fructose-1,6-bisphosphatase, chloroplastic</fullName>
        <shortName>FBPase</shortName>
        <ecNumber>3.1.3.11</ecNumber>
    </recommendedName>
    <alternativeName>
        <fullName>D-fructose-1,6-bisphosphate 1-phosphohydrolase</fullName>
    </alternativeName>
</protein>
<proteinExistence type="evidence at transcript level"/>
<comment type="catalytic activity">
    <reaction>
        <text>beta-D-fructose 1,6-bisphosphate + H2O = beta-D-fructose 6-phosphate + phosphate</text>
        <dbReference type="Rhea" id="RHEA:11064"/>
        <dbReference type="ChEBI" id="CHEBI:15377"/>
        <dbReference type="ChEBI" id="CHEBI:32966"/>
        <dbReference type="ChEBI" id="CHEBI:43474"/>
        <dbReference type="ChEBI" id="CHEBI:57634"/>
        <dbReference type="EC" id="3.1.3.11"/>
    </reaction>
</comment>
<comment type="cofactor">
    <cofactor evidence="1">
        <name>Mg(2+)</name>
        <dbReference type="ChEBI" id="CHEBI:18420"/>
    </cofactor>
    <text evidence="1">Binds 3 Mg(2+) ions per subunit.</text>
</comment>
<comment type="pathway">
    <text>Carbohydrate biosynthesis; Calvin cycle.</text>
</comment>
<comment type="subunit">
    <text evidence="1">Homotetramer.</text>
</comment>
<comment type="subcellular location">
    <subcellularLocation>
        <location>Plastid</location>
        <location>Chloroplast</location>
    </subcellularLocation>
</comment>
<comment type="tissue specificity">
    <text evidence="3">In photosynthetically active tissues, and in the shoot and root apical meristems.</text>
</comment>
<comment type="induction">
    <text evidence="1">Light activation through pH changes, Mg(2+) levels and also by light-modulated reduction of essential disulfide groups via the ferredoxin-thioredoxin f system.</text>
</comment>
<comment type="miscellaneous">
    <text>In plants there are two FBPase isozymes: one in the cytosol and the other in the chloroplast.</text>
</comment>
<comment type="similarity">
    <text evidence="4">Belongs to the FBPase class 1 family.</text>
</comment>
<gene>
    <name type="primary">FBP</name>
</gene>
<feature type="transit peptide" description="Chloroplast" evidence="2">
    <location>
        <begin position="1"/>
        <end position="49"/>
    </location>
</feature>
<feature type="chain" id="PRO_0000008820" description="Fructose-1,6-bisphosphatase, chloroplastic">
    <location>
        <begin position="50"/>
        <end position="409"/>
    </location>
</feature>
<feature type="binding site" evidence="1">
    <location>
        <position position="131"/>
    </location>
    <ligand>
        <name>Mg(2+)</name>
        <dbReference type="ChEBI" id="CHEBI:18420"/>
        <label>1</label>
    </ligand>
</feature>
<feature type="binding site" evidence="1">
    <location>
        <position position="160"/>
    </location>
    <ligand>
        <name>Mg(2+)</name>
        <dbReference type="ChEBI" id="CHEBI:18420"/>
        <label>1</label>
    </ligand>
</feature>
<feature type="binding site" evidence="1">
    <location>
        <position position="160"/>
    </location>
    <ligand>
        <name>Mg(2+)</name>
        <dbReference type="ChEBI" id="CHEBI:18420"/>
        <label>2</label>
    </ligand>
</feature>
<feature type="binding site" evidence="1">
    <location>
        <position position="181"/>
    </location>
    <ligand>
        <name>Mg(2+)</name>
        <dbReference type="ChEBI" id="CHEBI:18420"/>
        <label>2</label>
    </ligand>
</feature>
<feature type="binding site" evidence="1">
    <location>
        <position position="181"/>
    </location>
    <ligand>
        <name>Mg(2+)</name>
        <dbReference type="ChEBI" id="CHEBI:18420"/>
        <label>3</label>
    </ligand>
</feature>
<feature type="binding site" evidence="1">
    <location>
        <position position="183"/>
    </location>
    <ligand>
        <name>Mg(2+)</name>
        <dbReference type="ChEBI" id="CHEBI:18420"/>
        <label>2</label>
    </ligand>
</feature>
<feature type="binding site" evidence="1">
    <location>
        <begin position="184"/>
        <end position="187"/>
    </location>
    <ligand>
        <name>substrate</name>
    </ligand>
</feature>
<feature type="binding site" evidence="1">
    <location>
        <position position="184"/>
    </location>
    <ligand>
        <name>Mg(2+)</name>
        <dbReference type="ChEBI" id="CHEBI:18420"/>
        <label>3</label>
    </ligand>
</feature>
<feature type="binding site" evidence="1">
    <location>
        <position position="287"/>
    </location>
    <ligand>
        <name>substrate</name>
    </ligand>
</feature>
<feature type="binding site" evidence="1">
    <location>
        <position position="319"/>
    </location>
    <ligand>
        <name>substrate</name>
    </ligand>
</feature>
<feature type="binding site" evidence="1">
    <location>
        <position position="337"/>
    </location>
    <ligand>
        <name>substrate</name>
    </ligand>
</feature>
<feature type="binding site" evidence="1">
    <location>
        <position position="339"/>
    </location>
    <ligand>
        <name>substrate</name>
    </ligand>
</feature>
<feature type="binding site" evidence="1">
    <location>
        <position position="349"/>
    </location>
    <ligand>
        <name>substrate</name>
    </ligand>
</feature>
<feature type="binding site" evidence="1">
    <location>
        <position position="355"/>
    </location>
    <ligand>
        <name>Mg(2+)</name>
        <dbReference type="ChEBI" id="CHEBI:18420"/>
        <label>3</label>
    </ligand>
</feature>
<feature type="disulfide bond" description="Redox-active (light-modulated)" evidence="1">
    <location>
        <begin position="223"/>
        <end position="228"/>
    </location>
</feature>